<comment type="function">
    <text evidence="1">Tetrapolymerization of the monopyrrole PBG into the hydroxymethylbilane pre-uroporphyrinogen in several discrete steps.</text>
</comment>
<comment type="catalytic activity">
    <reaction evidence="1">
        <text>4 porphobilinogen + H2O = hydroxymethylbilane + 4 NH4(+)</text>
        <dbReference type="Rhea" id="RHEA:13185"/>
        <dbReference type="ChEBI" id="CHEBI:15377"/>
        <dbReference type="ChEBI" id="CHEBI:28938"/>
        <dbReference type="ChEBI" id="CHEBI:57845"/>
        <dbReference type="ChEBI" id="CHEBI:58126"/>
        <dbReference type="EC" id="2.5.1.61"/>
    </reaction>
</comment>
<comment type="cofactor">
    <cofactor evidence="1">
        <name>dipyrromethane</name>
        <dbReference type="ChEBI" id="CHEBI:60342"/>
    </cofactor>
    <text evidence="1">Binds 1 dipyrromethane group covalently.</text>
</comment>
<comment type="pathway">
    <text evidence="1">Porphyrin-containing compound metabolism; protoporphyrin-IX biosynthesis; coproporphyrinogen-III from 5-aminolevulinate: step 2/4.</text>
</comment>
<comment type="subunit">
    <text evidence="1">Monomer.</text>
</comment>
<comment type="miscellaneous">
    <text evidence="1">The porphobilinogen subunits are added to the dipyrromethane group.</text>
</comment>
<comment type="similarity">
    <text evidence="1">Belongs to the HMBS family.</text>
</comment>
<dbReference type="EC" id="2.5.1.61" evidence="1"/>
<dbReference type="EMBL" id="FM200053">
    <property type="protein sequence ID" value="CAR61796.1"/>
    <property type="molecule type" value="Genomic_DNA"/>
</dbReference>
<dbReference type="RefSeq" id="WP_001521319.1">
    <property type="nucleotide sequence ID" value="NC_011147.1"/>
</dbReference>
<dbReference type="SMR" id="B5BIU8"/>
<dbReference type="KEGG" id="sek:SSPA3518"/>
<dbReference type="HOGENOM" id="CLU_019704_0_2_6"/>
<dbReference type="UniPathway" id="UPA00251">
    <property type="reaction ID" value="UER00319"/>
</dbReference>
<dbReference type="Proteomes" id="UP000001869">
    <property type="component" value="Chromosome"/>
</dbReference>
<dbReference type="GO" id="GO:0005737">
    <property type="term" value="C:cytoplasm"/>
    <property type="evidence" value="ECO:0007669"/>
    <property type="project" value="TreeGrafter"/>
</dbReference>
<dbReference type="GO" id="GO:0004418">
    <property type="term" value="F:hydroxymethylbilane synthase activity"/>
    <property type="evidence" value="ECO:0007669"/>
    <property type="project" value="UniProtKB-UniRule"/>
</dbReference>
<dbReference type="GO" id="GO:0006782">
    <property type="term" value="P:protoporphyrinogen IX biosynthetic process"/>
    <property type="evidence" value="ECO:0007669"/>
    <property type="project" value="UniProtKB-UniRule"/>
</dbReference>
<dbReference type="CDD" id="cd13646">
    <property type="entry name" value="PBP2_EcHMBS_like"/>
    <property type="match status" value="1"/>
</dbReference>
<dbReference type="FunFam" id="3.30.160.40:FF:000002">
    <property type="entry name" value="Porphobilinogen deaminase"/>
    <property type="match status" value="1"/>
</dbReference>
<dbReference type="FunFam" id="3.40.190.10:FF:000004">
    <property type="entry name" value="Porphobilinogen deaminase"/>
    <property type="match status" value="1"/>
</dbReference>
<dbReference type="FunFam" id="3.40.190.10:FF:000005">
    <property type="entry name" value="Porphobilinogen deaminase"/>
    <property type="match status" value="1"/>
</dbReference>
<dbReference type="Gene3D" id="3.40.190.10">
    <property type="entry name" value="Periplasmic binding protein-like II"/>
    <property type="match status" value="2"/>
</dbReference>
<dbReference type="Gene3D" id="3.30.160.40">
    <property type="entry name" value="Porphobilinogen deaminase, C-terminal domain"/>
    <property type="match status" value="1"/>
</dbReference>
<dbReference type="HAMAP" id="MF_00260">
    <property type="entry name" value="Porphobil_deam"/>
    <property type="match status" value="1"/>
</dbReference>
<dbReference type="InterPro" id="IPR000860">
    <property type="entry name" value="HemC"/>
</dbReference>
<dbReference type="InterPro" id="IPR022419">
    <property type="entry name" value="Porphobilin_deaminase_cofac_BS"/>
</dbReference>
<dbReference type="InterPro" id="IPR022417">
    <property type="entry name" value="Porphobilin_deaminase_N"/>
</dbReference>
<dbReference type="InterPro" id="IPR022418">
    <property type="entry name" value="Porphobilinogen_deaminase_C"/>
</dbReference>
<dbReference type="InterPro" id="IPR036803">
    <property type="entry name" value="Porphobilinogen_deaminase_C_sf"/>
</dbReference>
<dbReference type="NCBIfam" id="TIGR00212">
    <property type="entry name" value="hemC"/>
    <property type="match status" value="1"/>
</dbReference>
<dbReference type="PANTHER" id="PTHR11557">
    <property type="entry name" value="PORPHOBILINOGEN DEAMINASE"/>
    <property type="match status" value="1"/>
</dbReference>
<dbReference type="PANTHER" id="PTHR11557:SF0">
    <property type="entry name" value="PORPHOBILINOGEN DEAMINASE"/>
    <property type="match status" value="1"/>
</dbReference>
<dbReference type="Pfam" id="PF01379">
    <property type="entry name" value="Porphobil_deam"/>
    <property type="match status" value="1"/>
</dbReference>
<dbReference type="Pfam" id="PF03900">
    <property type="entry name" value="Porphobil_deamC"/>
    <property type="match status" value="1"/>
</dbReference>
<dbReference type="PIRSF" id="PIRSF001438">
    <property type="entry name" value="4pyrrol_synth_OHMeBilane_synth"/>
    <property type="match status" value="1"/>
</dbReference>
<dbReference type="PRINTS" id="PR00151">
    <property type="entry name" value="PORPHBDMNASE"/>
</dbReference>
<dbReference type="SUPFAM" id="SSF53850">
    <property type="entry name" value="Periplasmic binding protein-like II"/>
    <property type="match status" value="1"/>
</dbReference>
<dbReference type="SUPFAM" id="SSF54782">
    <property type="entry name" value="Porphobilinogen deaminase (hydroxymethylbilane synthase), C-terminal domain"/>
    <property type="match status" value="1"/>
</dbReference>
<dbReference type="PROSITE" id="PS00533">
    <property type="entry name" value="PORPHOBILINOGEN_DEAM"/>
    <property type="match status" value="1"/>
</dbReference>
<accession>B5BIU8</accession>
<reference key="1">
    <citation type="journal article" date="2009" name="BMC Genomics">
        <title>Pseudogene accumulation in the evolutionary histories of Salmonella enterica serovars Paratyphi A and Typhi.</title>
        <authorList>
            <person name="Holt K.E."/>
            <person name="Thomson N.R."/>
            <person name="Wain J."/>
            <person name="Langridge G.C."/>
            <person name="Hasan R."/>
            <person name="Bhutta Z.A."/>
            <person name="Quail M.A."/>
            <person name="Norbertczak H."/>
            <person name="Walker D."/>
            <person name="Simmonds M."/>
            <person name="White B."/>
            <person name="Bason N."/>
            <person name="Mungall K."/>
            <person name="Dougan G."/>
            <person name="Parkhill J."/>
        </authorList>
    </citation>
    <scope>NUCLEOTIDE SEQUENCE [LARGE SCALE GENOMIC DNA]</scope>
    <source>
        <strain>AKU_12601</strain>
    </source>
</reference>
<gene>
    <name evidence="1" type="primary">hemC</name>
    <name type="ordered locus">SSPA3518</name>
</gene>
<sequence length="313" mass="33714">MLDNVLRIATRQSPLALWQAHYVKDALMATHPGLTVELVPMVTRGDVILDTPLAKVGGKGLFVKELEIALLEKRADIAVHSMKDVPVAFPDGLGLVTICEREDPRDAFVSNKYHSLDDLPAGSIVGTSSLRRQCQLAERRPDLIIRSLRGNVGTRLGKLDNGDYDAIILAVAGLKRLGLESRIRTALPPDVSLPAVGQGAVGIECRLDDARTQALLAPLNHSQTALRVTAERAMNTRLEGGCQVPIGSYAEIINGEIWLRALVGAPDGSVMVRGERRGSPEQAEQMGISLAEELLENGARAILTEVYNGETPA</sequence>
<name>HEM3_SALPK</name>
<feature type="chain" id="PRO_1000114176" description="Porphobilinogen deaminase">
    <location>
        <begin position="1"/>
        <end position="313"/>
    </location>
</feature>
<feature type="modified residue" description="S-(dipyrrolylmethanemethyl)cysteine" evidence="1">
    <location>
        <position position="242"/>
    </location>
</feature>
<evidence type="ECO:0000255" key="1">
    <source>
        <dbReference type="HAMAP-Rule" id="MF_00260"/>
    </source>
</evidence>
<organism>
    <name type="scientific">Salmonella paratyphi A (strain AKU_12601)</name>
    <dbReference type="NCBI Taxonomy" id="554290"/>
    <lineage>
        <taxon>Bacteria</taxon>
        <taxon>Pseudomonadati</taxon>
        <taxon>Pseudomonadota</taxon>
        <taxon>Gammaproteobacteria</taxon>
        <taxon>Enterobacterales</taxon>
        <taxon>Enterobacteriaceae</taxon>
        <taxon>Salmonella</taxon>
    </lineage>
</organism>
<proteinExistence type="inferred from homology"/>
<keyword id="KW-0627">Porphyrin biosynthesis</keyword>
<keyword id="KW-0808">Transferase</keyword>
<protein>
    <recommendedName>
        <fullName evidence="1">Porphobilinogen deaminase</fullName>
        <shortName evidence="1">PBG</shortName>
        <ecNumber evidence="1">2.5.1.61</ecNumber>
    </recommendedName>
    <alternativeName>
        <fullName evidence="1">Hydroxymethylbilane synthase</fullName>
        <shortName evidence="1">HMBS</shortName>
    </alternativeName>
    <alternativeName>
        <fullName evidence="1">Pre-uroporphyrinogen synthase</fullName>
    </alternativeName>
</protein>